<dbReference type="EC" id="1.17.1.8" evidence="1"/>
<dbReference type="EMBL" id="CR522870">
    <property type="protein sequence ID" value="CAG35160.1"/>
    <property type="status" value="ALT_INIT"/>
    <property type="molecule type" value="Genomic_DNA"/>
</dbReference>
<dbReference type="RefSeq" id="WP_041277519.1">
    <property type="nucleotide sequence ID" value="NC_006138.1"/>
</dbReference>
<dbReference type="SMR" id="Q6AR64"/>
<dbReference type="STRING" id="177439.DP0431"/>
<dbReference type="KEGG" id="dps:DP0431"/>
<dbReference type="eggNOG" id="COG0289">
    <property type="taxonomic scope" value="Bacteria"/>
</dbReference>
<dbReference type="HOGENOM" id="CLU_047479_2_1_7"/>
<dbReference type="OrthoDB" id="9790352at2"/>
<dbReference type="UniPathway" id="UPA00034">
    <property type="reaction ID" value="UER00018"/>
</dbReference>
<dbReference type="Proteomes" id="UP000000602">
    <property type="component" value="Chromosome"/>
</dbReference>
<dbReference type="GO" id="GO:0005829">
    <property type="term" value="C:cytosol"/>
    <property type="evidence" value="ECO:0007669"/>
    <property type="project" value="TreeGrafter"/>
</dbReference>
<dbReference type="GO" id="GO:0008839">
    <property type="term" value="F:4-hydroxy-tetrahydrodipicolinate reductase"/>
    <property type="evidence" value="ECO:0007669"/>
    <property type="project" value="UniProtKB-EC"/>
</dbReference>
<dbReference type="GO" id="GO:0051287">
    <property type="term" value="F:NAD binding"/>
    <property type="evidence" value="ECO:0007669"/>
    <property type="project" value="UniProtKB-UniRule"/>
</dbReference>
<dbReference type="GO" id="GO:0050661">
    <property type="term" value="F:NADP binding"/>
    <property type="evidence" value="ECO:0007669"/>
    <property type="project" value="UniProtKB-UniRule"/>
</dbReference>
<dbReference type="GO" id="GO:0016726">
    <property type="term" value="F:oxidoreductase activity, acting on CH or CH2 groups, NAD or NADP as acceptor"/>
    <property type="evidence" value="ECO:0007669"/>
    <property type="project" value="UniProtKB-UniRule"/>
</dbReference>
<dbReference type="GO" id="GO:0019877">
    <property type="term" value="P:diaminopimelate biosynthetic process"/>
    <property type="evidence" value="ECO:0007669"/>
    <property type="project" value="UniProtKB-UniRule"/>
</dbReference>
<dbReference type="GO" id="GO:0009089">
    <property type="term" value="P:lysine biosynthetic process via diaminopimelate"/>
    <property type="evidence" value="ECO:0007669"/>
    <property type="project" value="UniProtKB-UniRule"/>
</dbReference>
<dbReference type="CDD" id="cd02274">
    <property type="entry name" value="DHDPR_N"/>
    <property type="match status" value="1"/>
</dbReference>
<dbReference type="FunFam" id="3.30.360.10:FF:000004">
    <property type="entry name" value="4-hydroxy-tetrahydrodipicolinate reductase"/>
    <property type="match status" value="1"/>
</dbReference>
<dbReference type="Gene3D" id="3.30.360.10">
    <property type="entry name" value="Dihydrodipicolinate Reductase, domain 2"/>
    <property type="match status" value="1"/>
</dbReference>
<dbReference type="Gene3D" id="3.40.50.720">
    <property type="entry name" value="NAD(P)-binding Rossmann-like Domain"/>
    <property type="match status" value="1"/>
</dbReference>
<dbReference type="HAMAP" id="MF_00102">
    <property type="entry name" value="DapB"/>
    <property type="match status" value="1"/>
</dbReference>
<dbReference type="InterPro" id="IPR022663">
    <property type="entry name" value="DapB_C"/>
</dbReference>
<dbReference type="InterPro" id="IPR000846">
    <property type="entry name" value="DapB_N"/>
</dbReference>
<dbReference type="InterPro" id="IPR022664">
    <property type="entry name" value="DapB_N_CS"/>
</dbReference>
<dbReference type="InterPro" id="IPR023940">
    <property type="entry name" value="DHDPR_bac"/>
</dbReference>
<dbReference type="InterPro" id="IPR036291">
    <property type="entry name" value="NAD(P)-bd_dom_sf"/>
</dbReference>
<dbReference type="NCBIfam" id="TIGR00036">
    <property type="entry name" value="dapB"/>
    <property type="match status" value="1"/>
</dbReference>
<dbReference type="PANTHER" id="PTHR20836:SF0">
    <property type="entry name" value="4-HYDROXY-TETRAHYDRODIPICOLINATE REDUCTASE 1, CHLOROPLASTIC-RELATED"/>
    <property type="match status" value="1"/>
</dbReference>
<dbReference type="PANTHER" id="PTHR20836">
    <property type="entry name" value="DIHYDRODIPICOLINATE REDUCTASE"/>
    <property type="match status" value="1"/>
</dbReference>
<dbReference type="Pfam" id="PF05173">
    <property type="entry name" value="DapB_C"/>
    <property type="match status" value="1"/>
</dbReference>
<dbReference type="Pfam" id="PF01113">
    <property type="entry name" value="DapB_N"/>
    <property type="match status" value="1"/>
</dbReference>
<dbReference type="PIRSF" id="PIRSF000161">
    <property type="entry name" value="DHPR"/>
    <property type="match status" value="1"/>
</dbReference>
<dbReference type="SUPFAM" id="SSF55347">
    <property type="entry name" value="Glyceraldehyde-3-phosphate dehydrogenase-like, C-terminal domain"/>
    <property type="match status" value="1"/>
</dbReference>
<dbReference type="SUPFAM" id="SSF51735">
    <property type="entry name" value="NAD(P)-binding Rossmann-fold domains"/>
    <property type="match status" value="1"/>
</dbReference>
<dbReference type="PROSITE" id="PS01298">
    <property type="entry name" value="DAPB"/>
    <property type="match status" value="1"/>
</dbReference>
<gene>
    <name evidence="1" type="primary">dapB</name>
    <name type="ordered locus">DP0431</name>
</gene>
<sequence>MTKVIIAGASGRMGQRVAHMVEAHPELEYAAAFEAAGNPAIGKDIGRIVFGEENGVIVGEGLESVIADGDVIIDFTFHTATMEFARIAAKHGKAMVIGTTGLSVDELAELKDLSASFPCVQAPNMSVCVNVLFKLAKKTAAILGDDYDIEILEAHHNKKKDAPSGTALKLAEMAAEGVGRNLAEVGVYERNGIIGERDPKEIGIQTLRAADIVGEHTIYFAGAGERLEISHRAHSRDHFAKGAATAAAWLVGRENGIYDMFDVLGLQDL</sequence>
<protein>
    <recommendedName>
        <fullName evidence="1">4-hydroxy-tetrahydrodipicolinate reductase</fullName>
        <shortName evidence="1">HTPA reductase</shortName>
        <ecNumber evidence="1">1.17.1.8</ecNumber>
    </recommendedName>
</protein>
<name>DAPB_DESPS</name>
<evidence type="ECO:0000255" key="1">
    <source>
        <dbReference type="HAMAP-Rule" id="MF_00102"/>
    </source>
</evidence>
<evidence type="ECO:0000305" key="2"/>
<organism>
    <name type="scientific">Desulfotalea psychrophila (strain LSv54 / DSM 12343)</name>
    <dbReference type="NCBI Taxonomy" id="177439"/>
    <lineage>
        <taxon>Bacteria</taxon>
        <taxon>Pseudomonadati</taxon>
        <taxon>Thermodesulfobacteriota</taxon>
        <taxon>Desulfobulbia</taxon>
        <taxon>Desulfobulbales</taxon>
        <taxon>Desulfocapsaceae</taxon>
        <taxon>Desulfotalea</taxon>
    </lineage>
</organism>
<feature type="chain" id="PRO_0000228345" description="4-hydroxy-tetrahydrodipicolinate reductase">
    <location>
        <begin position="1"/>
        <end position="269"/>
    </location>
</feature>
<feature type="active site" description="Proton donor/acceptor" evidence="1">
    <location>
        <position position="155"/>
    </location>
</feature>
<feature type="active site" description="Proton donor" evidence="1">
    <location>
        <position position="159"/>
    </location>
</feature>
<feature type="binding site" evidence="1">
    <location>
        <begin position="8"/>
        <end position="13"/>
    </location>
    <ligand>
        <name>NAD(+)</name>
        <dbReference type="ChEBI" id="CHEBI:57540"/>
    </ligand>
</feature>
<feature type="binding site" evidence="1">
    <location>
        <position position="34"/>
    </location>
    <ligand>
        <name>NAD(+)</name>
        <dbReference type="ChEBI" id="CHEBI:57540"/>
    </ligand>
</feature>
<feature type="binding site" evidence="1">
    <location>
        <begin position="98"/>
        <end position="100"/>
    </location>
    <ligand>
        <name>NAD(+)</name>
        <dbReference type="ChEBI" id="CHEBI:57540"/>
    </ligand>
</feature>
<feature type="binding site" evidence="1">
    <location>
        <begin position="122"/>
        <end position="125"/>
    </location>
    <ligand>
        <name>NAD(+)</name>
        <dbReference type="ChEBI" id="CHEBI:57540"/>
    </ligand>
</feature>
<feature type="binding site" evidence="1">
    <location>
        <position position="156"/>
    </location>
    <ligand>
        <name>(S)-2,3,4,5-tetrahydrodipicolinate</name>
        <dbReference type="ChEBI" id="CHEBI:16845"/>
    </ligand>
</feature>
<feature type="binding site" evidence="1">
    <location>
        <begin position="165"/>
        <end position="166"/>
    </location>
    <ligand>
        <name>(S)-2,3,4,5-tetrahydrodipicolinate</name>
        <dbReference type="ChEBI" id="CHEBI:16845"/>
    </ligand>
</feature>
<accession>Q6AR64</accession>
<keyword id="KW-0028">Amino-acid biosynthesis</keyword>
<keyword id="KW-0963">Cytoplasm</keyword>
<keyword id="KW-0220">Diaminopimelate biosynthesis</keyword>
<keyword id="KW-0457">Lysine biosynthesis</keyword>
<keyword id="KW-0520">NAD</keyword>
<keyword id="KW-0521">NADP</keyword>
<keyword id="KW-0560">Oxidoreductase</keyword>
<keyword id="KW-1185">Reference proteome</keyword>
<comment type="function">
    <text evidence="1">Catalyzes the conversion of 4-hydroxy-tetrahydrodipicolinate (HTPA) to tetrahydrodipicolinate.</text>
</comment>
<comment type="catalytic activity">
    <reaction evidence="1">
        <text>(S)-2,3,4,5-tetrahydrodipicolinate + NAD(+) + H2O = (2S,4S)-4-hydroxy-2,3,4,5-tetrahydrodipicolinate + NADH + H(+)</text>
        <dbReference type="Rhea" id="RHEA:35323"/>
        <dbReference type="ChEBI" id="CHEBI:15377"/>
        <dbReference type="ChEBI" id="CHEBI:15378"/>
        <dbReference type="ChEBI" id="CHEBI:16845"/>
        <dbReference type="ChEBI" id="CHEBI:57540"/>
        <dbReference type="ChEBI" id="CHEBI:57945"/>
        <dbReference type="ChEBI" id="CHEBI:67139"/>
        <dbReference type="EC" id="1.17.1.8"/>
    </reaction>
</comment>
<comment type="catalytic activity">
    <reaction evidence="1">
        <text>(S)-2,3,4,5-tetrahydrodipicolinate + NADP(+) + H2O = (2S,4S)-4-hydroxy-2,3,4,5-tetrahydrodipicolinate + NADPH + H(+)</text>
        <dbReference type="Rhea" id="RHEA:35331"/>
        <dbReference type="ChEBI" id="CHEBI:15377"/>
        <dbReference type="ChEBI" id="CHEBI:15378"/>
        <dbReference type="ChEBI" id="CHEBI:16845"/>
        <dbReference type="ChEBI" id="CHEBI:57783"/>
        <dbReference type="ChEBI" id="CHEBI:58349"/>
        <dbReference type="ChEBI" id="CHEBI:67139"/>
        <dbReference type="EC" id="1.17.1.8"/>
    </reaction>
</comment>
<comment type="pathway">
    <text evidence="1">Amino-acid biosynthesis; L-lysine biosynthesis via DAP pathway; (S)-tetrahydrodipicolinate from L-aspartate: step 4/4.</text>
</comment>
<comment type="subcellular location">
    <subcellularLocation>
        <location evidence="1">Cytoplasm</location>
    </subcellularLocation>
</comment>
<comment type="similarity">
    <text evidence="1">Belongs to the DapB family.</text>
</comment>
<comment type="caution">
    <text evidence="2">Was originally thought to be a dihydrodipicolinate reductase (DHDPR), catalyzing the conversion of dihydrodipicolinate to tetrahydrodipicolinate. However, it was shown in E.coli that the substrate of the enzymatic reaction is not dihydrodipicolinate (DHDP) but in fact (2S,4S)-4-hydroxy-2,3,4,5-tetrahydrodipicolinic acid (HTPA), the product released by the DapA-catalyzed reaction.</text>
</comment>
<comment type="sequence caution" evidence="2">
    <conflict type="erroneous initiation">
        <sequence resource="EMBL-CDS" id="CAG35160"/>
    </conflict>
</comment>
<proteinExistence type="inferred from homology"/>
<reference key="1">
    <citation type="journal article" date="2004" name="Environ. Microbiol.">
        <title>The genome of Desulfotalea psychrophila, a sulfate-reducing bacterium from permanently cold Arctic sediments.</title>
        <authorList>
            <person name="Rabus R."/>
            <person name="Ruepp A."/>
            <person name="Frickey T."/>
            <person name="Rattei T."/>
            <person name="Fartmann B."/>
            <person name="Stark M."/>
            <person name="Bauer M."/>
            <person name="Zibat A."/>
            <person name="Lombardot T."/>
            <person name="Becker I."/>
            <person name="Amann J."/>
            <person name="Gellner K."/>
            <person name="Teeling H."/>
            <person name="Leuschner W.D."/>
            <person name="Gloeckner F.-O."/>
            <person name="Lupas A.N."/>
            <person name="Amann R."/>
            <person name="Klenk H.-P."/>
        </authorList>
    </citation>
    <scope>NUCLEOTIDE SEQUENCE [LARGE SCALE GENOMIC DNA]</scope>
    <source>
        <strain>DSM 12343 / LSv54</strain>
    </source>
</reference>